<dbReference type="EMBL" id="AC000106">
    <property type="protein sequence ID" value="AAB70412.1"/>
    <property type="molecule type" value="Genomic_DNA"/>
</dbReference>
<dbReference type="EMBL" id="CP002684">
    <property type="protein sequence ID" value="AEE28372.1"/>
    <property type="molecule type" value="Genomic_DNA"/>
</dbReference>
<dbReference type="PIR" id="C86221">
    <property type="entry name" value="C86221"/>
</dbReference>
<dbReference type="RefSeq" id="NP_172369.1">
    <property type="nucleotide sequence ID" value="NM_100766.3"/>
</dbReference>
<dbReference type="SMR" id="O04035"/>
<dbReference type="FunCoup" id="O04035">
    <property type="interactions" value="29"/>
</dbReference>
<dbReference type="STRING" id="3702.O04035"/>
<dbReference type="PaxDb" id="3702-AT1G08940.1"/>
<dbReference type="ProteomicsDB" id="246824"/>
<dbReference type="EnsemblPlants" id="AT1G08940.1">
    <property type="protein sequence ID" value="AT1G08940.1"/>
    <property type="gene ID" value="AT1G08940"/>
</dbReference>
<dbReference type="GeneID" id="837415"/>
<dbReference type="Gramene" id="AT1G08940.1">
    <property type="protein sequence ID" value="AT1G08940.1"/>
    <property type="gene ID" value="AT1G08940"/>
</dbReference>
<dbReference type="KEGG" id="ath:AT1G08940"/>
<dbReference type="Araport" id="AT1G08940"/>
<dbReference type="TAIR" id="AT1G08940"/>
<dbReference type="eggNOG" id="ENOG502QTHF">
    <property type="taxonomic scope" value="Eukaryota"/>
</dbReference>
<dbReference type="HOGENOM" id="CLU_033323_3_2_1"/>
<dbReference type="InParanoid" id="O04035"/>
<dbReference type="OMA" id="DRITMFS"/>
<dbReference type="OrthoDB" id="10261749at2759"/>
<dbReference type="PhylomeDB" id="O04035"/>
<dbReference type="PRO" id="PR:O04035"/>
<dbReference type="Proteomes" id="UP000006548">
    <property type="component" value="Chromosome 1"/>
</dbReference>
<dbReference type="ExpressionAtlas" id="O04035">
    <property type="expression patterns" value="baseline and differential"/>
</dbReference>
<dbReference type="GO" id="GO:0003824">
    <property type="term" value="F:catalytic activity"/>
    <property type="evidence" value="ECO:0007669"/>
    <property type="project" value="InterPro"/>
</dbReference>
<dbReference type="CDD" id="cd07067">
    <property type="entry name" value="HP_PGM_like"/>
    <property type="match status" value="1"/>
</dbReference>
<dbReference type="Gene3D" id="3.40.50.1240">
    <property type="entry name" value="Phosphoglycerate mutase-like"/>
    <property type="match status" value="1"/>
</dbReference>
<dbReference type="InterPro" id="IPR013078">
    <property type="entry name" value="His_Pase_superF_clade-1"/>
</dbReference>
<dbReference type="InterPro" id="IPR029033">
    <property type="entry name" value="His_PPase_superfam"/>
</dbReference>
<dbReference type="InterPro" id="IPR001345">
    <property type="entry name" value="PG/BPGM_mutase_AS"/>
</dbReference>
<dbReference type="InterPro" id="IPR052765">
    <property type="entry name" value="PGM-Related"/>
</dbReference>
<dbReference type="PANTHER" id="PTHR46192">
    <property type="entry name" value="BROAD-RANGE ACID PHOSPHATASE DET1"/>
    <property type="match status" value="1"/>
</dbReference>
<dbReference type="Pfam" id="PF00300">
    <property type="entry name" value="His_Phos_1"/>
    <property type="match status" value="1"/>
</dbReference>
<dbReference type="SMART" id="SM00855">
    <property type="entry name" value="PGAM"/>
    <property type="match status" value="1"/>
</dbReference>
<dbReference type="SUPFAM" id="SSF53254">
    <property type="entry name" value="Phosphoglycerate mutase-like"/>
    <property type="match status" value="1"/>
</dbReference>
<dbReference type="PROSITE" id="PS00175">
    <property type="entry name" value="PG_MUTASE"/>
    <property type="match status" value="1"/>
</dbReference>
<protein>
    <recommendedName>
        <fullName evidence="3">Phosphoglycerate mutase-like protein AT74H</fullName>
    </recommendedName>
    <alternativeName>
        <fullName>Protein At-74 homolog</fullName>
        <shortName>At-74H</shortName>
    </alternativeName>
</protein>
<evidence type="ECO:0000250" key="1">
    <source>
        <dbReference type="UniProtKB" id="P62707"/>
    </source>
</evidence>
<evidence type="ECO:0000250" key="2">
    <source>
        <dbReference type="UniProtKB" id="Q9MAA2"/>
    </source>
</evidence>
<evidence type="ECO:0000305" key="3"/>
<evidence type="ECO:0000312" key="4">
    <source>
        <dbReference type="Araport" id="AT1G08940"/>
    </source>
</evidence>
<evidence type="ECO:0000312" key="5">
    <source>
        <dbReference type="EMBL" id="AAB70412.1"/>
    </source>
</evidence>
<feature type="chain" id="PRO_0000430636" description="Phosphoglycerate mutase-like protein AT74H">
    <location>
        <begin position="1"/>
        <end position="281"/>
    </location>
</feature>
<feature type="active site" description="Tele-phosphohistidine intermediate" evidence="1">
    <location>
        <position position="17"/>
    </location>
</feature>
<feature type="active site" description="Proton donor/acceptor" evidence="1">
    <location>
        <position position="109"/>
    </location>
</feature>
<reference key="1">
    <citation type="journal article" date="2000" name="Nature">
        <title>Sequence and analysis of chromosome 1 of the plant Arabidopsis thaliana.</title>
        <authorList>
            <person name="Theologis A."/>
            <person name="Ecker J.R."/>
            <person name="Palm C.J."/>
            <person name="Federspiel N.A."/>
            <person name="Kaul S."/>
            <person name="White O."/>
            <person name="Alonso J."/>
            <person name="Altafi H."/>
            <person name="Araujo R."/>
            <person name="Bowman C.L."/>
            <person name="Brooks S.Y."/>
            <person name="Buehler E."/>
            <person name="Chan A."/>
            <person name="Chao Q."/>
            <person name="Chen H."/>
            <person name="Cheuk R.F."/>
            <person name="Chin C.W."/>
            <person name="Chung M.K."/>
            <person name="Conn L."/>
            <person name="Conway A.B."/>
            <person name="Conway A.R."/>
            <person name="Creasy T.H."/>
            <person name="Dewar K."/>
            <person name="Dunn P."/>
            <person name="Etgu P."/>
            <person name="Feldblyum T.V."/>
            <person name="Feng J.-D."/>
            <person name="Fong B."/>
            <person name="Fujii C.Y."/>
            <person name="Gill J.E."/>
            <person name="Goldsmith A.D."/>
            <person name="Haas B."/>
            <person name="Hansen N.F."/>
            <person name="Hughes B."/>
            <person name="Huizar L."/>
            <person name="Hunter J.L."/>
            <person name="Jenkins J."/>
            <person name="Johnson-Hopson C."/>
            <person name="Khan S."/>
            <person name="Khaykin E."/>
            <person name="Kim C.J."/>
            <person name="Koo H.L."/>
            <person name="Kremenetskaia I."/>
            <person name="Kurtz D.B."/>
            <person name="Kwan A."/>
            <person name="Lam B."/>
            <person name="Langin-Hooper S."/>
            <person name="Lee A."/>
            <person name="Lee J.M."/>
            <person name="Lenz C.A."/>
            <person name="Li J.H."/>
            <person name="Li Y.-P."/>
            <person name="Lin X."/>
            <person name="Liu S.X."/>
            <person name="Liu Z.A."/>
            <person name="Luros J.S."/>
            <person name="Maiti R."/>
            <person name="Marziali A."/>
            <person name="Militscher J."/>
            <person name="Miranda M."/>
            <person name="Nguyen M."/>
            <person name="Nierman W.C."/>
            <person name="Osborne B.I."/>
            <person name="Pai G."/>
            <person name="Peterson J."/>
            <person name="Pham P.K."/>
            <person name="Rizzo M."/>
            <person name="Rooney T."/>
            <person name="Rowley D."/>
            <person name="Sakano H."/>
            <person name="Salzberg S.L."/>
            <person name="Schwartz J.R."/>
            <person name="Shinn P."/>
            <person name="Southwick A.M."/>
            <person name="Sun H."/>
            <person name="Tallon L.J."/>
            <person name="Tambunga G."/>
            <person name="Toriumi M.J."/>
            <person name="Town C.D."/>
            <person name="Utterback T."/>
            <person name="Van Aken S."/>
            <person name="Vaysberg M."/>
            <person name="Vysotskaia V.S."/>
            <person name="Walker M."/>
            <person name="Wu D."/>
            <person name="Yu G."/>
            <person name="Fraser C.M."/>
            <person name="Venter J.C."/>
            <person name="Davis R.W."/>
        </authorList>
    </citation>
    <scope>NUCLEOTIDE SEQUENCE [LARGE SCALE GENOMIC DNA]</scope>
    <source>
        <strain>cv. Columbia</strain>
    </source>
</reference>
<reference key="2">
    <citation type="journal article" date="2017" name="Plant J.">
        <title>Araport11: a complete reannotation of the Arabidopsis thaliana reference genome.</title>
        <authorList>
            <person name="Cheng C.Y."/>
            <person name="Krishnakumar V."/>
            <person name="Chan A.P."/>
            <person name="Thibaud-Nissen F."/>
            <person name="Schobel S."/>
            <person name="Town C.D."/>
        </authorList>
    </citation>
    <scope>GENOME REANNOTATION</scope>
    <source>
        <strain>cv. Columbia</strain>
    </source>
</reference>
<gene>
    <name evidence="4" type="ordered locus">At1g08940</name>
    <name evidence="5" type="ORF">F7G19.18</name>
</gene>
<organism>
    <name type="scientific">Arabidopsis thaliana</name>
    <name type="common">Mouse-ear cress</name>
    <dbReference type="NCBI Taxonomy" id="3702"/>
    <lineage>
        <taxon>Eukaryota</taxon>
        <taxon>Viridiplantae</taxon>
        <taxon>Streptophyta</taxon>
        <taxon>Embryophyta</taxon>
        <taxon>Tracheophyta</taxon>
        <taxon>Spermatophyta</taxon>
        <taxon>Magnoliopsida</taxon>
        <taxon>eudicotyledons</taxon>
        <taxon>Gunneridae</taxon>
        <taxon>Pentapetalae</taxon>
        <taxon>rosids</taxon>
        <taxon>malvids</taxon>
        <taxon>Brassicales</taxon>
        <taxon>Brassicaceae</taxon>
        <taxon>Camelineae</taxon>
        <taxon>Arabidopsis</taxon>
    </lineage>
</organism>
<accession>O04035</accession>
<keyword id="KW-1185">Reference proteome</keyword>
<comment type="function">
    <text evidence="2">May play a role in carbohydrates metabolism.</text>
</comment>
<comment type="similarity">
    <text evidence="3">Belongs to the phosphoglycerate mutase family.</text>
</comment>
<sequence length="281" mass="32679">MVNEKKMLPKRIILMRHGESAGNIDAGAYATTPDHKIPLTEEGRAQAREAGKKMRALISTQSGGACGENWRVYFYVSPYERTRTTLREVGKGFSRKRVIGVREECRIREQDFGNFQVEERMRVVKETRERFGRFFYRFPEGESAADVYDRVSSFLESMWRDVDMNRHQVDPSSELNLVIVSHGLTSRVFLTKWFKWTVAEFERLNNFGNCEFRVMELGASGEYTFAIHHSEEEMLDWGMSKDMIDDQKDRVDGCRVTTSNDSCSLHLNEYFDLLDVTDDEE</sequence>
<name>AT74H_ARATH</name>
<proteinExistence type="inferred from homology"/>